<comment type="function">
    <text evidence="1">May have a specific function in the mechanism or regulation of T-cell cytolytic activity.</text>
</comment>
<comment type="subcellular location">
    <subcellularLocation>
        <location evidence="2">Endoplasmic reticulum</location>
    </subcellularLocation>
</comment>
<comment type="similarity">
    <text evidence="4 5">Belongs to the peptidase C1 family.</text>
</comment>
<sequence length="371" mass="42120">MTLTAHLSYFLVLLLAGQGLSDSLLTKDAGPRPLELKEVFKLFQIRFNRSYWNPAEYTRRLSIFAHNLAQAQRLQQEDLGTAEFGETPFSDLTEEEFGQLYGQERSPERTPNMTKKVESNTWGESVPRTCDWRKAKNIISSVKNQGSCKCCWAMAAADNIQALWRIKHQQFVDVSVQELLDCERCGNGCNGGFVWDAYLTVLNNSGLASEKDYPFQGDRKPHRCLAKKYKKVAWIQDFTMLSNNEQAIAHYLAVHGPITVTINMKLLQHYQKGVIKATPSSCDPRQVDHSVLLVGFGKEKEGMQTGTVLSHSRKRRHSSPYWILKNSWGAHWGEKGYFRLYRGNNTCGVTKYPFTAQVDSPVKKARTSCPP</sequence>
<dbReference type="EC" id="3.4.22.-"/>
<dbReference type="EMBL" id="AF014941">
    <property type="protein sequence ID" value="AAB82455.1"/>
    <property type="molecule type" value="mRNA"/>
</dbReference>
<dbReference type="EMBL" id="AC122861">
    <property type="status" value="NOT_ANNOTATED_CDS"/>
    <property type="molecule type" value="Genomic_DNA"/>
</dbReference>
<dbReference type="CCDS" id="CCDS29465.1"/>
<dbReference type="RefSeq" id="NP_034115.2">
    <property type="nucleotide sequence ID" value="NM_009985.5"/>
</dbReference>
<dbReference type="SMR" id="P56203"/>
<dbReference type="BioGRID" id="198977">
    <property type="interactions" value="1"/>
</dbReference>
<dbReference type="FunCoup" id="P56203">
    <property type="interactions" value="135"/>
</dbReference>
<dbReference type="STRING" id="10090.ENSMUSP00000025844"/>
<dbReference type="MEROPS" id="C01.037"/>
<dbReference type="GlyCosmos" id="P56203">
    <property type="glycosylation" value="4 sites, No reported glycans"/>
</dbReference>
<dbReference type="GlyGen" id="P56203">
    <property type="glycosylation" value="4 sites"/>
</dbReference>
<dbReference type="PhosphoSitePlus" id="P56203"/>
<dbReference type="PaxDb" id="10090-ENSMUSP00000025844"/>
<dbReference type="ProteomicsDB" id="279924"/>
<dbReference type="Antibodypedia" id="4281">
    <property type="antibodies" value="102 antibodies from 24 providers"/>
</dbReference>
<dbReference type="DNASU" id="13041"/>
<dbReference type="Ensembl" id="ENSMUST00000025844.6">
    <property type="protein sequence ID" value="ENSMUSP00000025844.5"/>
    <property type="gene ID" value="ENSMUSG00000024910.6"/>
</dbReference>
<dbReference type="GeneID" id="13041"/>
<dbReference type="KEGG" id="mmu:13041"/>
<dbReference type="UCSC" id="uc008gdk.2">
    <property type="organism name" value="mouse"/>
</dbReference>
<dbReference type="AGR" id="MGI:1338045"/>
<dbReference type="CTD" id="1521"/>
<dbReference type="MGI" id="MGI:1338045">
    <property type="gene designation" value="Ctsw"/>
</dbReference>
<dbReference type="VEuPathDB" id="HostDB:ENSMUSG00000024910"/>
<dbReference type="eggNOG" id="KOG1542">
    <property type="taxonomic scope" value="Eukaryota"/>
</dbReference>
<dbReference type="GeneTree" id="ENSGT00940000161630"/>
<dbReference type="HOGENOM" id="CLU_012184_4_1_1"/>
<dbReference type="InParanoid" id="P56203"/>
<dbReference type="OMA" id="EALWGIR"/>
<dbReference type="OrthoDB" id="387093at2759"/>
<dbReference type="PhylomeDB" id="P56203"/>
<dbReference type="TreeFam" id="TF337736"/>
<dbReference type="Reactome" id="R-MMU-114608">
    <property type="pathway name" value="Platelet degranulation"/>
</dbReference>
<dbReference type="BioGRID-ORCS" id="13041">
    <property type="hits" value="1 hit in 79 CRISPR screens"/>
</dbReference>
<dbReference type="ChiTaRS" id="Ctsw">
    <property type="organism name" value="mouse"/>
</dbReference>
<dbReference type="PRO" id="PR:P56203"/>
<dbReference type="Proteomes" id="UP000000589">
    <property type="component" value="Chromosome 19"/>
</dbReference>
<dbReference type="RNAct" id="P56203">
    <property type="molecule type" value="protein"/>
</dbReference>
<dbReference type="Bgee" id="ENSMUSG00000024910">
    <property type="expression patterns" value="Expressed in peripheral lymph node and 83 other cell types or tissues"/>
</dbReference>
<dbReference type="ExpressionAtlas" id="P56203">
    <property type="expression patterns" value="baseline and differential"/>
</dbReference>
<dbReference type="GO" id="GO:0005783">
    <property type="term" value="C:endoplasmic reticulum"/>
    <property type="evidence" value="ECO:0007669"/>
    <property type="project" value="UniProtKB-SubCell"/>
</dbReference>
<dbReference type="GO" id="GO:0008234">
    <property type="term" value="F:cysteine-type peptidase activity"/>
    <property type="evidence" value="ECO:0007669"/>
    <property type="project" value="UniProtKB-KW"/>
</dbReference>
<dbReference type="GO" id="GO:0006508">
    <property type="term" value="P:proteolysis"/>
    <property type="evidence" value="ECO:0007669"/>
    <property type="project" value="UniProtKB-KW"/>
</dbReference>
<dbReference type="CDD" id="cd02248">
    <property type="entry name" value="Peptidase_C1A"/>
    <property type="match status" value="1"/>
</dbReference>
<dbReference type="FunFam" id="3.90.70.10:FF:000100">
    <property type="entry name" value="Cathepsin W"/>
    <property type="match status" value="1"/>
</dbReference>
<dbReference type="Gene3D" id="3.90.70.10">
    <property type="entry name" value="Cysteine proteinases"/>
    <property type="match status" value="1"/>
</dbReference>
<dbReference type="InterPro" id="IPR038765">
    <property type="entry name" value="Papain-like_cys_pep_sf"/>
</dbReference>
<dbReference type="InterPro" id="IPR025661">
    <property type="entry name" value="Pept_asp_AS"/>
</dbReference>
<dbReference type="InterPro" id="IPR025660">
    <property type="entry name" value="Pept_his_AS"/>
</dbReference>
<dbReference type="InterPro" id="IPR013128">
    <property type="entry name" value="Peptidase_C1A"/>
</dbReference>
<dbReference type="InterPro" id="IPR000668">
    <property type="entry name" value="Peptidase_C1A_C"/>
</dbReference>
<dbReference type="InterPro" id="IPR039417">
    <property type="entry name" value="Peptidase_C1A_papain-like"/>
</dbReference>
<dbReference type="InterPro" id="IPR013201">
    <property type="entry name" value="Prot_inhib_I29"/>
</dbReference>
<dbReference type="PANTHER" id="PTHR12411">
    <property type="entry name" value="CYSTEINE PROTEASE FAMILY C1-RELATED"/>
    <property type="match status" value="1"/>
</dbReference>
<dbReference type="Pfam" id="PF08246">
    <property type="entry name" value="Inhibitor_I29"/>
    <property type="match status" value="1"/>
</dbReference>
<dbReference type="Pfam" id="PF00112">
    <property type="entry name" value="Peptidase_C1"/>
    <property type="match status" value="1"/>
</dbReference>
<dbReference type="PRINTS" id="PR00705">
    <property type="entry name" value="PAPAIN"/>
</dbReference>
<dbReference type="SMART" id="SM00848">
    <property type="entry name" value="Inhibitor_I29"/>
    <property type="match status" value="1"/>
</dbReference>
<dbReference type="SMART" id="SM00645">
    <property type="entry name" value="Pept_C1"/>
    <property type="match status" value="1"/>
</dbReference>
<dbReference type="SUPFAM" id="SSF54001">
    <property type="entry name" value="Cysteine proteinases"/>
    <property type="match status" value="1"/>
</dbReference>
<dbReference type="PROSITE" id="PS00640">
    <property type="entry name" value="THIOL_PROTEASE_ASN"/>
    <property type="match status" value="1"/>
</dbReference>
<dbReference type="PROSITE" id="PS00639">
    <property type="entry name" value="THIOL_PROTEASE_HIS"/>
    <property type="match status" value="1"/>
</dbReference>
<protein>
    <recommendedName>
        <fullName>Cathepsin W</fullName>
        <ecNumber>3.4.22.-</ecNumber>
    </recommendedName>
    <alternativeName>
        <fullName>Lymphopain</fullName>
    </alternativeName>
</protein>
<reference key="1">
    <citation type="journal article" date="1998" name="Leukemia">
        <title>Lymphopain, a cytotoxic T and natural killer cell-associated cysteine proteinase.</title>
        <authorList>
            <person name="Brown J."/>
            <person name="Matutes E."/>
            <person name="Singleton A."/>
            <person name="Price C."/>
            <person name="Molgaard H."/>
            <person name="Buttle D."/>
            <person name="Enver T."/>
        </authorList>
    </citation>
    <scope>NUCLEOTIDE SEQUENCE [MRNA]</scope>
</reference>
<reference key="2">
    <citation type="journal article" date="2009" name="PLoS Biol.">
        <title>Lineage-specific biology revealed by a finished genome assembly of the mouse.</title>
        <authorList>
            <person name="Church D.M."/>
            <person name="Goodstadt L."/>
            <person name="Hillier L.W."/>
            <person name="Zody M.C."/>
            <person name="Goldstein S."/>
            <person name="She X."/>
            <person name="Bult C.J."/>
            <person name="Agarwala R."/>
            <person name="Cherry J.L."/>
            <person name="DiCuccio M."/>
            <person name="Hlavina W."/>
            <person name="Kapustin Y."/>
            <person name="Meric P."/>
            <person name="Maglott D."/>
            <person name="Birtle Z."/>
            <person name="Marques A.C."/>
            <person name="Graves T."/>
            <person name="Zhou S."/>
            <person name="Teague B."/>
            <person name="Potamousis K."/>
            <person name="Churas C."/>
            <person name="Place M."/>
            <person name="Herschleb J."/>
            <person name="Runnheim R."/>
            <person name="Forrest D."/>
            <person name="Amos-Landgraf J."/>
            <person name="Schwartz D.C."/>
            <person name="Cheng Z."/>
            <person name="Lindblad-Toh K."/>
            <person name="Eichler E.E."/>
            <person name="Ponting C.P."/>
        </authorList>
    </citation>
    <scope>NUCLEOTIDE SEQUENCE [LARGE SCALE GENOMIC DNA]</scope>
    <source>
        <strain>C57BL/6J</strain>
    </source>
</reference>
<accession>P56203</accession>
<proteinExistence type="evidence at transcript level"/>
<feature type="signal peptide" evidence="3">
    <location>
        <begin position="1"/>
        <end position="21"/>
    </location>
</feature>
<feature type="propeptide" id="PRO_0000026329" evidence="3">
    <location>
        <begin position="22"/>
        <end position="125"/>
    </location>
</feature>
<feature type="chain" id="PRO_0000026330" description="Cathepsin W">
    <location>
        <begin position="126"/>
        <end position="371"/>
    </location>
</feature>
<feature type="active site" evidence="1">
    <location>
        <position position="151"/>
    </location>
</feature>
<feature type="active site" evidence="1">
    <location>
        <position position="289"/>
    </location>
</feature>
<feature type="active site" evidence="1">
    <location>
        <position position="326"/>
    </location>
</feature>
<feature type="glycosylation site" description="N-linked (GlcNAc...) asparagine" evidence="3">
    <location>
        <position position="48"/>
    </location>
</feature>
<feature type="glycosylation site" description="N-linked (GlcNAc...) asparagine" evidence="3">
    <location>
        <position position="112"/>
    </location>
</feature>
<feature type="glycosylation site" description="N-linked (GlcNAc...) asparagine" evidence="3">
    <location>
        <position position="203"/>
    </location>
</feature>
<feature type="glycosylation site" description="N-linked (GlcNAc...) asparagine" evidence="3">
    <location>
        <position position="344"/>
    </location>
</feature>
<feature type="disulfide bond" evidence="1">
    <location>
        <begin position="148"/>
        <end position="189"/>
    </location>
</feature>
<feature type="disulfide bond" evidence="1">
    <location>
        <begin position="182"/>
        <end position="224"/>
    </location>
</feature>
<feature type="disulfide bond" evidence="1">
    <location>
        <begin position="282"/>
        <end position="347"/>
    </location>
</feature>
<name>CATW_MOUSE</name>
<organism>
    <name type="scientific">Mus musculus</name>
    <name type="common">Mouse</name>
    <dbReference type="NCBI Taxonomy" id="10090"/>
    <lineage>
        <taxon>Eukaryota</taxon>
        <taxon>Metazoa</taxon>
        <taxon>Chordata</taxon>
        <taxon>Craniata</taxon>
        <taxon>Vertebrata</taxon>
        <taxon>Euteleostomi</taxon>
        <taxon>Mammalia</taxon>
        <taxon>Eutheria</taxon>
        <taxon>Euarchontoglires</taxon>
        <taxon>Glires</taxon>
        <taxon>Rodentia</taxon>
        <taxon>Myomorpha</taxon>
        <taxon>Muroidea</taxon>
        <taxon>Muridae</taxon>
        <taxon>Murinae</taxon>
        <taxon>Mus</taxon>
        <taxon>Mus</taxon>
    </lineage>
</organism>
<evidence type="ECO:0000250" key="1"/>
<evidence type="ECO:0000250" key="2">
    <source>
        <dbReference type="UniProtKB" id="P56202"/>
    </source>
</evidence>
<evidence type="ECO:0000255" key="3"/>
<evidence type="ECO:0000255" key="4">
    <source>
        <dbReference type="PROSITE-ProRule" id="PRU10089"/>
    </source>
</evidence>
<evidence type="ECO:0000255" key="5">
    <source>
        <dbReference type="PROSITE-ProRule" id="PRU10090"/>
    </source>
</evidence>
<keyword id="KW-1015">Disulfide bond</keyword>
<keyword id="KW-0256">Endoplasmic reticulum</keyword>
<keyword id="KW-0325">Glycoprotein</keyword>
<keyword id="KW-0378">Hydrolase</keyword>
<keyword id="KW-0645">Protease</keyword>
<keyword id="KW-1185">Reference proteome</keyword>
<keyword id="KW-0732">Signal</keyword>
<keyword id="KW-0788">Thiol protease</keyword>
<keyword id="KW-0865">Zymogen</keyword>
<gene>
    <name type="primary">Ctsw</name>
</gene>